<gene>
    <name type="primary">MTC6</name>
    <name type="ORF">CAWG_02814</name>
</gene>
<comment type="function">
    <text evidence="1">May be involved in telomere capping.</text>
</comment>
<comment type="subcellular location">
    <subcellularLocation>
        <location evidence="3">Membrane</location>
        <topology evidence="3">Single-pass type I membrane protein</topology>
    </subcellularLocation>
</comment>
<comment type="similarity">
    <text evidence="3">Belongs to the MTC6 family.</text>
</comment>
<organism>
    <name type="scientific">Candida albicans (strain WO-1)</name>
    <name type="common">Yeast</name>
    <dbReference type="NCBI Taxonomy" id="294748"/>
    <lineage>
        <taxon>Eukaryota</taxon>
        <taxon>Fungi</taxon>
        <taxon>Dikarya</taxon>
        <taxon>Ascomycota</taxon>
        <taxon>Saccharomycotina</taxon>
        <taxon>Pichiomycetes</taxon>
        <taxon>Debaryomycetaceae</taxon>
        <taxon>Candida/Lodderomyces clade</taxon>
        <taxon>Candida</taxon>
    </lineage>
</organism>
<accession>C4YQQ4</accession>
<dbReference type="EMBL" id="CM000310">
    <property type="protein sequence ID" value="EEQ44543.1"/>
    <property type="molecule type" value="Genomic_DNA"/>
</dbReference>
<dbReference type="GlyCosmos" id="C4YQQ4">
    <property type="glycosylation" value="18 sites, No reported glycans"/>
</dbReference>
<dbReference type="PaxDb" id="5476-C4YQQ4"/>
<dbReference type="VEuPathDB" id="FungiDB:CAWG_02814"/>
<dbReference type="HOGENOM" id="CLU_033723_0_0_1"/>
<dbReference type="OMA" id="WGTIDPQ"/>
<dbReference type="OrthoDB" id="15393at766764"/>
<dbReference type="Proteomes" id="UP000001429">
    <property type="component" value="Chromosome 3"/>
</dbReference>
<dbReference type="GO" id="GO:0016020">
    <property type="term" value="C:membrane"/>
    <property type="evidence" value="ECO:0007669"/>
    <property type="project" value="UniProtKB-SubCell"/>
</dbReference>
<dbReference type="InterPro" id="IPR051008">
    <property type="entry name" value="Telomere_Capping_Maintenance"/>
</dbReference>
<dbReference type="PANTHER" id="PTHR35518:SF2">
    <property type="entry name" value="MAINTENANCE OF TELOMERE CAPPING PROTEIN 6"/>
    <property type="match status" value="1"/>
</dbReference>
<dbReference type="PANTHER" id="PTHR35518">
    <property type="entry name" value="MAINTENANCE OF TELOMOERE CAPPING"/>
    <property type="match status" value="1"/>
</dbReference>
<dbReference type="Pfam" id="PF25506">
    <property type="entry name" value="TIM-barrel_MTC6"/>
    <property type="match status" value="1"/>
</dbReference>
<reference key="1">
    <citation type="journal article" date="2009" name="Nature">
        <title>Evolution of pathogenicity and sexual reproduction in eight Candida genomes.</title>
        <authorList>
            <person name="Butler G."/>
            <person name="Rasmussen M.D."/>
            <person name="Lin M.F."/>
            <person name="Santos M.A.S."/>
            <person name="Sakthikumar S."/>
            <person name="Munro C.A."/>
            <person name="Rheinbay E."/>
            <person name="Grabherr M."/>
            <person name="Forche A."/>
            <person name="Reedy J.L."/>
            <person name="Agrafioti I."/>
            <person name="Arnaud M.B."/>
            <person name="Bates S."/>
            <person name="Brown A.J.P."/>
            <person name="Brunke S."/>
            <person name="Costanzo M.C."/>
            <person name="Fitzpatrick D.A."/>
            <person name="de Groot P.W.J."/>
            <person name="Harris D."/>
            <person name="Hoyer L.L."/>
            <person name="Hube B."/>
            <person name="Klis F.M."/>
            <person name="Kodira C."/>
            <person name="Lennard N."/>
            <person name="Logue M.E."/>
            <person name="Martin R."/>
            <person name="Neiman A.M."/>
            <person name="Nikolaou E."/>
            <person name="Quail M.A."/>
            <person name="Quinn J."/>
            <person name="Santos M.C."/>
            <person name="Schmitzberger F.F."/>
            <person name="Sherlock G."/>
            <person name="Shah P."/>
            <person name="Silverstein K.A.T."/>
            <person name="Skrzypek M.S."/>
            <person name="Soll D."/>
            <person name="Staggs R."/>
            <person name="Stansfield I."/>
            <person name="Stumpf M.P.H."/>
            <person name="Sudbery P.E."/>
            <person name="Srikantha T."/>
            <person name="Zeng Q."/>
            <person name="Berman J."/>
            <person name="Berriman M."/>
            <person name="Heitman J."/>
            <person name="Gow N.A.R."/>
            <person name="Lorenz M.C."/>
            <person name="Birren B.W."/>
            <person name="Kellis M."/>
            <person name="Cuomo C.A."/>
        </authorList>
    </citation>
    <scope>NUCLEOTIDE SEQUENCE [LARGE SCALE GENOMIC DNA]</scope>
    <source>
        <strain>WO-1</strain>
    </source>
</reference>
<name>MTC6_CANAW</name>
<evidence type="ECO:0000250" key="1"/>
<evidence type="ECO:0000255" key="2"/>
<evidence type="ECO:0000305" key="3"/>
<sequence>MTSLLFAFSLFLSFSVGSIFPFSTSNGPAVNDTLQNAIRSQRDVSKPIPIDRVGFSGVSLSSFFESEGYSSDSLSNLNGLLKENVDGVMIDLYWNEFTSKWQLCPAPFPNNITYTTASNRIVDVSWNNKTYKCDPNLSTDNIMSILNSFIRDTNTDVEANFMHVMYNLKSIHYEKSNQTISLENIYKEKNSNLNVVGMDTLNDTVSLLSSYIFTPTLLKQYQSTSNKYTNSSSSIRYIDSLNETQAIQDFYSQSTILMPSLQTVLLTQYKRLMVHVVTNDMAESSRSYQISSSDKDTIFFNSDLPASIFHTDNASADELCYELSDAYNRTDVNIAEFNKVSLNATLRLVVDDDKTPFTTKSLSKYVRCGYCPIFNSTEYSSQKVTEGNSSIISREFASNLFWSWAPGQPSGPDNCINCTRPTTNNTSKHSDDNGEEEEGNNIAYKCVALTEEGWEVSNCYEKYLFACQNKLSRNEWKLNNSTKRNYFDIDDDDCPEGYFFSLPRSNIEMLSLMTTVKQENVNYPIWIDLNDITVENCFVSGGPYAQCPYQETVTTDKFVRMIAPSFVVAMVVLVLIFIEKVFRKTPIQTNRKRYWKKAIQEYYAKNDYEGVPS</sequence>
<protein>
    <recommendedName>
        <fullName>Maintenance of telomere capping protein 6</fullName>
    </recommendedName>
</protein>
<feature type="signal peptide" evidence="2">
    <location>
        <begin position="1"/>
        <end position="17"/>
    </location>
</feature>
<feature type="chain" id="PRO_0000407773" description="Maintenance of telomere capping protein 6">
    <location>
        <begin position="18"/>
        <end position="613"/>
    </location>
</feature>
<feature type="topological domain" description="Extracellular" evidence="2">
    <location>
        <begin position="18"/>
        <end position="557"/>
    </location>
</feature>
<feature type="transmembrane region" description="Helical" evidence="2">
    <location>
        <begin position="558"/>
        <end position="578"/>
    </location>
</feature>
<feature type="topological domain" description="Cytoplasmic" evidence="2">
    <location>
        <begin position="579"/>
        <end position="613"/>
    </location>
</feature>
<feature type="glycosylation site" description="N-linked (GlcNAc...) asparagine" evidence="2">
    <location>
        <position position="31"/>
    </location>
</feature>
<feature type="glycosylation site" description="N-linked (GlcNAc...) asparagine" evidence="2">
    <location>
        <position position="111"/>
    </location>
</feature>
<feature type="glycosylation site" description="N-linked (GlcNAc...) asparagine" evidence="2">
    <location>
        <position position="128"/>
    </location>
</feature>
<feature type="glycosylation site" description="N-linked (GlcNAc...) asparagine" evidence="2">
    <location>
        <position position="136"/>
    </location>
</feature>
<feature type="glycosylation site" description="N-linked (GlcNAc...) asparagine" evidence="2">
    <location>
        <position position="177"/>
    </location>
</feature>
<feature type="glycosylation site" description="N-linked (GlcNAc...) asparagine" evidence="2">
    <location>
        <position position="202"/>
    </location>
</feature>
<feature type="glycosylation site" description="N-linked (GlcNAc...) asparagine" evidence="2">
    <location>
        <position position="230"/>
    </location>
</feature>
<feature type="glycosylation site" description="N-linked (GlcNAc...) asparagine" evidence="2">
    <location>
        <position position="242"/>
    </location>
</feature>
<feature type="glycosylation site" description="N-linked (GlcNAc...) asparagine" evidence="2">
    <location>
        <position position="313"/>
    </location>
</feature>
<feature type="glycosylation site" description="N-linked (GlcNAc...) asparagine" evidence="2">
    <location>
        <position position="328"/>
    </location>
</feature>
<feature type="glycosylation site" description="N-linked (GlcNAc...) asparagine" evidence="2">
    <location>
        <position position="343"/>
    </location>
</feature>
<feature type="glycosylation site" description="N-linked (GlcNAc...) asparagine" evidence="2">
    <location>
        <position position="375"/>
    </location>
</feature>
<feature type="glycosylation site" description="N-linked (GlcNAc...) asparagine" evidence="2">
    <location>
        <position position="388"/>
    </location>
</feature>
<feature type="glycosylation site" description="N-linked (GlcNAc...) asparagine" evidence="2">
    <location>
        <position position="417"/>
    </location>
</feature>
<feature type="glycosylation site" description="N-linked (GlcNAc...) asparagine" evidence="2">
    <location>
        <position position="424"/>
    </location>
</feature>
<feature type="glycosylation site" description="N-linked (GlcNAc...) asparagine" evidence="2">
    <location>
        <position position="425"/>
    </location>
</feature>
<feature type="glycosylation site" description="N-linked (GlcNAc...) asparagine" evidence="2">
    <location>
        <position position="479"/>
    </location>
</feature>
<feature type="glycosylation site" description="N-linked (GlcNAc...) asparagine" evidence="2">
    <location>
        <position position="480"/>
    </location>
</feature>
<keyword id="KW-0325">Glycoprotein</keyword>
<keyword id="KW-0472">Membrane</keyword>
<keyword id="KW-0732">Signal</keyword>
<keyword id="KW-0812">Transmembrane</keyword>
<keyword id="KW-1133">Transmembrane helix</keyword>
<proteinExistence type="inferred from homology"/>